<proteinExistence type="inferred from homology"/>
<comment type="function">
    <text evidence="1">Binds as a heterodimer with protein bS6 to the central domain of the 16S rRNA, where it helps stabilize the platform of the 30S subunit.</text>
</comment>
<comment type="subunit">
    <text evidence="1">Part of the 30S ribosomal subunit. Forms a tight heterodimer with protein bS6.</text>
</comment>
<comment type="similarity">
    <text evidence="1">Belongs to the bacterial ribosomal protein bS18 family.</text>
</comment>
<keyword id="KW-1185">Reference proteome</keyword>
<keyword id="KW-0687">Ribonucleoprotein</keyword>
<keyword id="KW-0689">Ribosomal protein</keyword>
<keyword id="KW-0694">RNA-binding</keyword>
<keyword id="KW-0699">rRNA-binding</keyword>
<name>RS18_PSYIN</name>
<organism>
    <name type="scientific">Psychromonas ingrahamii (strain DSM 17664 / CCUG 51855 / 37)</name>
    <dbReference type="NCBI Taxonomy" id="357804"/>
    <lineage>
        <taxon>Bacteria</taxon>
        <taxon>Pseudomonadati</taxon>
        <taxon>Pseudomonadota</taxon>
        <taxon>Gammaproteobacteria</taxon>
        <taxon>Alteromonadales</taxon>
        <taxon>Psychromonadaceae</taxon>
        <taxon>Psychromonas</taxon>
    </lineage>
</organism>
<feature type="chain" id="PRO_1000003578" description="Small ribosomal subunit protein bS18">
    <location>
        <begin position="1"/>
        <end position="75"/>
    </location>
</feature>
<gene>
    <name evidence="1" type="primary">rpsR</name>
    <name type="ordered locus">Ping_3421</name>
</gene>
<dbReference type="EMBL" id="CP000510">
    <property type="protein sequence ID" value="ABM05105.1"/>
    <property type="molecule type" value="Genomic_DNA"/>
</dbReference>
<dbReference type="RefSeq" id="WP_011771657.1">
    <property type="nucleotide sequence ID" value="NC_008709.1"/>
</dbReference>
<dbReference type="SMR" id="A1T040"/>
<dbReference type="STRING" id="357804.Ping_3421"/>
<dbReference type="KEGG" id="pin:Ping_3421"/>
<dbReference type="eggNOG" id="COG0238">
    <property type="taxonomic scope" value="Bacteria"/>
</dbReference>
<dbReference type="HOGENOM" id="CLU_148710_2_3_6"/>
<dbReference type="OrthoDB" id="9812008at2"/>
<dbReference type="Proteomes" id="UP000000639">
    <property type="component" value="Chromosome"/>
</dbReference>
<dbReference type="GO" id="GO:0022627">
    <property type="term" value="C:cytosolic small ribosomal subunit"/>
    <property type="evidence" value="ECO:0007669"/>
    <property type="project" value="TreeGrafter"/>
</dbReference>
<dbReference type="GO" id="GO:0070181">
    <property type="term" value="F:small ribosomal subunit rRNA binding"/>
    <property type="evidence" value="ECO:0007669"/>
    <property type="project" value="TreeGrafter"/>
</dbReference>
<dbReference type="GO" id="GO:0003735">
    <property type="term" value="F:structural constituent of ribosome"/>
    <property type="evidence" value="ECO:0007669"/>
    <property type="project" value="InterPro"/>
</dbReference>
<dbReference type="GO" id="GO:0006412">
    <property type="term" value="P:translation"/>
    <property type="evidence" value="ECO:0007669"/>
    <property type="project" value="UniProtKB-UniRule"/>
</dbReference>
<dbReference type="FunFam" id="4.10.640.10:FF:000001">
    <property type="entry name" value="30S ribosomal protein S18"/>
    <property type="match status" value="1"/>
</dbReference>
<dbReference type="Gene3D" id="4.10.640.10">
    <property type="entry name" value="Ribosomal protein S18"/>
    <property type="match status" value="1"/>
</dbReference>
<dbReference type="HAMAP" id="MF_00270">
    <property type="entry name" value="Ribosomal_bS18"/>
    <property type="match status" value="1"/>
</dbReference>
<dbReference type="InterPro" id="IPR001648">
    <property type="entry name" value="Ribosomal_bS18"/>
</dbReference>
<dbReference type="InterPro" id="IPR018275">
    <property type="entry name" value="Ribosomal_bS18_CS"/>
</dbReference>
<dbReference type="InterPro" id="IPR036870">
    <property type="entry name" value="Ribosomal_bS18_sf"/>
</dbReference>
<dbReference type="NCBIfam" id="TIGR00165">
    <property type="entry name" value="S18"/>
    <property type="match status" value="1"/>
</dbReference>
<dbReference type="PANTHER" id="PTHR13479">
    <property type="entry name" value="30S RIBOSOMAL PROTEIN S18"/>
    <property type="match status" value="1"/>
</dbReference>
<dbReference type="PANTHER" id="PTHR13479:SF40">
    <property type="entry name" value="SMALL RIBOSOMAL SUBUNIT PROTEIN BS18M"/>
    <property type="match status" value="1"/>
</dbReference>
<dbReference type="Pfam" id="PF01084">
    <property type="entry name" value="Ribosomal_S18"/>
    <property type="match status" value="1"/>
</dbReference>
<dbReference type="PRINTS" id="PR00974">
    <property type="entry name" value="RIBOSOMALS18"/>
</dbReference>
<dbReference type="SUPFAM" id="SSF46911">
    <property type="entry name" value="Ribosomal protein S18"/>
    <property type="match status" value="1"/>
</dbReference>
<dbReference type="PROSITE" id="PS00057">
    <property type="entry name" value="RIBOSOMAL_S18"/>
    <property type="match status" value="1"/>
</dbReference>
<evidence type="ECO:0000255" key="1">
    <source>
        <dbReference type="HAMAP-Rule" id="MF_00270"/>
    </source>
</evidence>
<evidence type="ECO:0000305" key="2"/>
<protein>
    <recommendedName>
        <fullName evidence="1">Small ribosomal subunit protein bS18</fullName>
    </recommendedName>
    <alternativeName>
        <fullName evidence="2">30S ribosomal protein S18</fullName>
    </alternativeName>
</protein>
<sequence length="75" mass="8863">MARYFRRRKFCRFTAEGVSEIDYKDVVTLKNYITESGKIVPSRITGTCAKYQRQLARAIKRARYLSLLPYTDLHK</sequence>
<accession>A1T040</accession>
<reference key="1">
    <citation type="journal article" date="2008" name="BMC Genomics">
        <title>Genomics of an extreme psychrophile, Psychromonas ingrahamii.</title>
        <authorList>
            <person name="Riley M."/>
            <person name="Staley J.T."/>
            <person name="Danchin A."/>
            <person name="Wang T.Z."/>
            <person name="Brettin T.S."/>
            <person name="Hauser L.J."/>
            <person name="Land M.L."/>
            <person name="Thompson L.S."/>
        </authorList>
    </citation>
    <scope>NUCLEOTIDE SEQUENCE [LARGE SCALE GENOMIC DNA]</scope>
    <source>
        <strain>DSM 17664 / CCUG 51855 / 37</strain>
    </source>
</reference>